<comment type="function">
    <text evidence="3 4 5">Inhibits proteasome 26S assembly and proteolytic activity by impairing the association of the 19S regulatory complex with the 20S core. In case of HIV-1 infection, recruited by viral Tat to the HIV-1 promoter, where it promotes the recruitment of 19S regulatory complex through dissociation of the proteasome 26S. This presumably promotes provirus transcription efficiency. Protects SUPT6H from proteasomal degradation.</text>
</comment>
<comment type="subunit">
    <text evidence="3 5">Interacts with PSMC1, PSMC2, PSMC3, PSMC4, PSMC5 and PSMC6. Interacts with SUPT6H.</text>
</comment>
<comment type="subunit">
    <text evidence="4">(Microbial infection) Interacts with HIV-1 Tat.</text>
</comment>
<comment type="interaction">
    <interactant intactId="EBI-1056358">
        <id>Q9BRP4</id>
    </interactant>
    <interactant intactId="EBI-357745">
        <id>P62195</id>
        <label>PSMC5</label>
    </interactant>
    <organismsDiffer>false</organismsDiffer>
    <experiments>5</experiments>
</comment>
<comment type="alternative products">
    <event type="alternative splicing"/>
    <isoform>
        <id>Q9BRP4-1</id>
        <name>1</name>
        <sequence type="displayed"/>
    </isoform>
    <isoform>
        <id>Q9BRP4-2</id>
        <name>2</name>
        <sequence type="described" ref="VSP_018477"/>
    </isoform>
    <isoform>
        <id>Q9BRP4-3</id>
        <name>3</name>
        <sequence type="described" ref="VSP_044699"/>
    </isoform>
</comment>
<comment type="tissue specificity">
    <text evidence="3">Ubiquitously expressed, with highest levels in kidney, brain and testis.</text>
</comment>
<comment type="similarity">
    <text evidence="11">Belongs to the WD repeat PAAF1/RPN14 family.</text>
</comment>
<organism>
    <name type="scientific">Homo sapiens</name>
    <name type="common">Human</name>
    <dbReference type="NCBI Taxonomy" id="9606"/>
    <lineage>
        <taxon>Eukaryota</taxon>
        <taxon>Metazoa</taxon>
        <taxon>Chordata</taxon>
        <taxon>Craniata</taxon>
        <taxon>Vertebrata</taxon>
        <taxon>Euteleostomi</taxon>
        <taxon>Mammalia</taxon>
        <taxon>Eutheria</taxon>
        <taxon>Euarchontoglires</taxon>
        <taxon>Primates</taxon>
        <taxon>Haplorrhini</taxon>
        <taxon>Catarrhini</taxon>
        <taxon>Hominidae</taxon>
        <taxon>Homo</taxon>
    </lineage>
</organism>
<gene>
    <name type="primary">PAAF1</name>
    <name type="synonym">WDR71</name>
</gene>
<sequence length="392" mass="42190">MAAPLRIQSDWAQALRKDEGEAWLSCHPPGKPSLYGSLTCQGIGLDGIPEVTASEGFTVNEINKKSIHISCPKENASSKFLAPYTTFSRIHTKSITCLDISSRGGLGVSSSTDGTMKIWQASNGELRRVLEGHVFDVNCCRFFPSGLVVLSGGMDAQLKIWSAEDASCVVTFKGHKGGILDTAIVDRGRNVVSASRDGTARLWDCGRSACLGVLADCGSSINGVAVGAADNSINLGSPEQMPSEREVGTEAKMLLLAREDKKLQCLGLQSRQLVFLFIGSDAFNCCTFLSGFLLLAGTQDGNIYQLDVRSPRAPVQVIHRSGAPVLSLLSVRDGFIASQGDGSCFIVQQDLDYVTELTGADCDPVYKVATWEKQIYTCCRDGLVRRYQLSDL</sequence>
<feature type="initiator methionine" description="Removed" evidence="12">
    <location>
        <position position="1"/>
    </location>
</feature>
<feature type="chain" id="PRO_0000235685" description="Proteasomal ATPase-associated factor 1">
    <location>
        <begin position="2"/>
        <end position="392"/>
    </location>
</feature>
<feature type="repeat" description="WD 1">
    <location>
        <begin position="82"/>
        <end position="121"/>
    </location>
</feature>
<feature type="repeat" description="WD 2">
    <location>
        <begin position="125"/>
        <end position="163"/>
    </location>
</feature>
<feature type="repeat" description="WD 3">
    <location>
        <begin position="167"/>
        <end position="205"/>
    </location>
</feature>
<feature type="repeat" description="WD 4">
    <location>
        <begin position="209"/>
        <end position="259"/>
    </location>
</feature>
<feature type="repeat" description="WD 5">
    <location>
        <begin position="270"/>
        <end position="308"/>
    </location>
</feature>
<feature type="repeat" description="WD 6">
    <location>
        <begin position="313"/>
        <end position="349"/>
    </location>
</feature>
<feature type="repeat" description="WD 7">
    <location>
        <begin position="353"/>
        <end position="389"/>
    </location>
</feature>
<feature type="modified residue" description="N-acetylalanine" evidence="12">
    <location>
        <position position="2"/>
    </location>
</feature>
<feature type="splice variant" id="VSP_044699" description="In isoform 3." evidence="8">
    <location>
        <begin position="1"/>
        <end position="115"/>
    </location>
</feature>
<feature type="splice variant" id="VSP_018477" description="In isoform 2." evidence="9 10">
    <original>MAAPLRIQSDWAQALRKDEGEAWLSCHPPG</original>
    <variation>MLVPCFLYSLQNR</variation>
    <location>
        <begin position="1"/>
        <end position="30"/>
    </location>
</feature>
<feature type="sequence variant" id="VAR_026415" description="In dbSNP:rs17850051." evidence="2">
    <original>A</original>
    <variation>V</variation>
    <location>
        <position position="53"/>
    </location>
</feature>
<feature type="sequence variant" id="VAR_032082" description="In dbSNP:rs2067912." evidence="7">
    <original>C</original>
    <variation>S</variation>
    <location>
        <position position="139"/>
    </location>
</feature>
<feature type="sequence variant" id="VAR_026416" description="In dbSNP:rs3741138." evidence="1 2 6">
    <original>A</original>
    <variation>G</variation>
    <location>
        <position position="209"/>
    </location>
</feature>
<protein>
    <recommendedName>
        <fullName>Proteasomal ATPase-associated factor 1</fullName>
    </recommendedName>
    <alternativeName>
        <fullName>Protein G-16</fullName>
    </alternativeName>
    <alternativeName>
        <fullName>WD repeat-containing protein 71</fullName>
    </alternativeName>
</protein>
<dbReference type="EMBL" id="AF087895">
    <property type="protein sequence ID" value="AAP97194.1"/>
    <property type="molecule type" value="mRNA"/>
</dbReference>
<dbReference type="EMBL" id="AK021910">
    <property type="protein sequence ID" value="BAB13933.1"/>
    <property type="molecule type" value="mRNA"/>
</dbReference>
<dbReference type="EMBL" id="AK222501">
    <property type="protein sequence ID" value="BAD96221.1"/>
    <property type="molecule type" value="mRNA"/>
</dbReference>
<dbReference type="EMBL" id="AK298258">
    <property type="protein sequence ID" value="BAG60522.1"/>
    <property type="molecule type" value="mRNA"/>
</dbReference>
<dbReference type="EMBL" id="AK316394">
    <property type="protein sequence ID" value="BAH14765.1"/>
    <property type="molecule type" value="mRNA"/>
</dbReference>
<dbReference type="EMBL" id="AP002770">
    <property type="status" value="NOT_ANNOTATED_CDS"/>
    <property type="molecule type" value="Genomic_DNA"/>
</dbReference>
<dbReference type="EMBL" id="CH471076">
    <property type="protein sequence ID" value="EAW74917.1"/>
    <property type="molecule type" value="Genomic_DNA"/>
</dbReference>
<dbReference type="EMBL" id="BC006142">
    <property type="protein sequence ID" value="AAH06142.2"/>
    <property type="molecule type" value="mRNA"/>
</dbReference>
<dbReference type="EMBL" id="BC021541">
    <property type="protein sequence ID" value="AAH21541.1"/>
    <property type="molecule type" value="mRNA"/>
</dbReference>
<dbReference type="EMBL" id="BC028628">
    <property type="protein sequence ID" value="AAH28628.1"/>
    <property type="molecule type" value="mRNA"/>
</dbReference>
<dbReference type="CCDS" id="CCDS58157.1">
    <molecule id="Q9BRP4-2"/>
</dbReference>
<dbReference type="CCDS" id="CCDS58158.1">
    <molecule id="Q9BRP4-3"/>
</dbReference>
<dbReference type="CCDS" id="CCDS8226.1">
    <molecule id="Q9BRP4-1"/>
</dbReference>
<dbReference type="RefSeq" id="NP_001254732.1">
    <molecule id="Q9BRP4-2"/>
    <property type="nucleotide sequence ID" value="NM_001267803.2"/>
</dbReference>
<dbReference type="RefSeq" id="NP_001254733.1">
    <molecule id="Q9BRP4-2"/>
    <property type="nucleotide sequence ID" value="NM_001267804.2"/>
</dbReference>
<dbReference type="RefSeq" id="NP_001254734.1">
    <molecule id="Q9BRP4-2"/>
    <property type="nucleotide sequence ID" value="NM_001267805.2"/>
</dbReference>
<dbReference type="RefSeq" id="NP_001254735.1">
    <molecule id="Q9BRP4-3"/>
    <property type="nucleotide sequence ID" value="NM_001267806.2"/>
</dbReference>
<dbReference type="RefSeq" id="NP_079431.1">
    <molecule id="Q9BRP4-1"/>
    <property type="nucleotide sequence ID" value="NM_025155.3"/>
</dbReference>
<dbReference type="SMR" id="Q9BRP4"/>
<dbReference type="BioGRID" id="123191">
    <property type="interactions" value="80"/>
</dbReference>
<dbReference type="FunCoup" id="Q9BRP4">
    <property type="interactions" value="167"/>
</dbReference>
<dbReference type="IntAct" id="Q9BRP4">
    <property type="interactions" value="33"/>
</dbReference>
<dbReference type="MINT" id="Q9BRP4"/>
<dbReference type="STRING" id="9606.ENSP00000438071"/>
<dbReference type="iPTMnet" id="Q9BRP4"/>
<dbReference type="MetOSite" id="Q9BRP4"/>
<dbReference type="PhosphoSitePlus" id="Q9BRP4"/>
<dbReference type="BioMuta" id="PAAF1"/>
<dbReference type="DMDM" id="97217547"/>
<dbReference type="jPOST" id="Q9BRP4"/>
<dbReference type="MassIVE" id="Q9BRP4"/>
<dbReference type="PaxDb" id="9606-ENSP00000311665"/>
<dbReference type="PeptideAtlas" id="Q9BRP4"/>
<dbReference type="ProteomicsDB" id="7085"/>
<dbReference type="ProteomicsDB" id="78795">
    <molecule id="Q9BRP4-1"/>
</dbReference>
<dbReference type="ProteomicsDB" id="78796">
    <molecule id="Q9BRP4-2"/>
</dbReference>
<dbReference type="Pumba" id="Q9BRP4"/>
<dbReference type="Antibodypedia" id="50309">
    <property type="antibodies" value="127 antibodies from 19 providers"/>
</dbReference>
<dbReference type="DNASU" id="80227"/>
<dbReference type="Ensembl" id="ENST00000310571.8">
    <molecule id="Q9BRP4-1"/>
    <property type="protein sequence ID" value="ENSP00000311665.4"/>
    <property type="gene ID" value="ENSG00000175575.13"/>
</dbReference>
<dbReference type="Ensembl" id="ENST00000376384.9">
    <molecule id="Q9BRP4-2"/>
    <property type="protein sequence ID" value="ENSP00000365564.5"/>
    <property type="gene ID" value="ENSG00000175575.13"/>
</dbReference>
<dbReference type="Ensembl" id="ENST00000535604.5">
    <molecule id="Q9BRP4-3"/>
    <property type="protein sequence ID" value="ENSP00000438789.1"/>
    <property type="gene ID" value="ENSG00000175575.13"/>
</dbReference>
<dbReference type="Ensembl" id="ENST00000536003.5">
    <molecule id="Q9BRP4-2"/>
    <property type="protein sequence ID" value="ENSP00000438124.1"/>
    <property type="gene ID" value="ENSG00000175575.13"/>
</dbReference>
<dbReference type="Ensembl" id="ENST00000541951.5">
    <molecule id="Q9BRP4-3"/>
    <property type="protein sequence ID" value="ENSP00000441333.1"/>
    <property type="gene ID" value="ENSG00000175575.13"/>
</dbReference>
<dbReference type="Ensembl" id="ENST00000544552.5">
    <molecule id="Q9BRP4-2"/>
    <property type="protein sequence ID" value="ENSP00000441494.1"/>
    <property type="gene ID" value="ENSG00000175575.13"/>
</dbReference>
<dbReference type="GeneID" id="80227"/>
<dbReference type="KEGG" id="hsa:80227"/>
<dbReference type="MANE-Select" id="ENST00000310571.8">
    <property type="protein sequence ID" value="ENSP00000311665.4"/>
    <property type="RefSeq nucleotide sequence ID" value="NM_025155.3"/>
    <property type="RefSeq protein sequence ID" value="NP_079431.1"/>
</dbReference>
<dbReference type="UCSC" id="uc001ouk.3">
    <molecule id="Q9BRP4-1"/>
    <property type="organism name" value="human"/>
</dbReference>
<dbReference type="AGR" id="HGNC:25687"/>
<dbReference type="CTD" id="80227"/>
<dbReference type="GeneCards" id="PAAF1"/>
<dbReference type="HGNC" id="HGNC:25687">
    <property type="gene designation" value="PAAF1"/>
</dbReference>
<dbReference type="HPA" id="ENSG00000175575">
    <property type="expression patterns" value="Tissue enhanced (brain)"/>
</dbReference>
<dbReference type="MIM" id="619772">
    <property type="type" value="gene"/>
</dbReference>
<dbReference type="neXtProt" id="NX_Q9BRP4"/>
<dbReference type="OpenTargets" id="ENSG00000175575"/>
<dbReference type="PharmGKB" id="PA162398551"/>
<dbReference type="VEuPathDB" id="HostDB:ENSG00000175575"/>
<dbReference type="eggNOG" id="KOG0266">
    <property type="taxonomic scope" value="Eukaryota"/>
</dbReference>
<dbReference type="GeneTree" id="ENSGT00390000005948"/>
<dbReference type="HOGENOM" id="CLU_037051_1_0_1"/>
<dbReference type="InParanoid" id="Q9BRP4"/>
<dbReference type="OMA" id="CNWNEAL"/>
<dbReference type="OrthoDB" id="27537at2759"/>
<dbReference type="PAN-GO" id="Q9BRP4">
    <property type="GO annotations" value="0 GO annotations based on evolutionary models"/>
</dbReference>
<dbReference type="PhylomeDB" id="Q9BRP4"/>
<dbReference type="TreeFam" id="TF313690"/>
<dbReference type="PathwayCommons" id="Q9BRP4"/>
<dbReference type="Reactome" id="R-HSA-9907900">
    <property type="pathway name" value="Proteasome assembly"/>
</dbReference>
<dbReference type="SignaLink" id="Q9BRP4"/>
<dbReference type="BioGRID-ORCS" id="80227">
    <property type="hits" value="9 hits in 1155 CRISPR screens"/>
</dbReference>
<dbReference type="ChiTaRS" id="PAAF1">
    <property type="organism name" value="human"/>
</dbReference>
<dbReference type="GeneWiki" id="PAAF1"/>
<dbReference type="GenomeRNAi" id="80227"/>
<dbReference type="Pharos" id="Q9BRP4">
    <property type="development level" value="Tbio"/>
</dbReference>
<dbReference type="PRO" id="PR:Q9BRP4"/>
<dbReference type="Proteomes" id="UP000005640">
    <property type="component" value="Chromosome 11"/>
</dbReference>
<dbReference type="RNAct" id="Q9BRP4">
    <property type="molecule type" value="protein"/>
</dbReference>
<dbReference type="Bgee" id="ENSG00000175575">
    <property type="expression patterns" value="Expressed in C1 segment of cervical spinal cord and 190 other cell types or tissues"/>
</dbReference>
<dbReference type="ExpressionAtlas" id="Q9BRP4">
    <property type="expression patterns" value="baseline and differential"/>
</dbReference>
<dbReference type="GO" id="GO:0005829">
    <property type="term" value="C:cytosol"/>
    <property type="evidence" value="ECO:0000304"/>
    <property type="project" value="Reactome"/>
</dbReference>
<dbReference type="GO" id="GO:0000502">
    <property type="term" value="C:proteasome complex"/>
    <property type="evidence" value="ECO:0000314"/>
    <property type="project" value="UniProtKB"/>
</dbReference>
<dbReference type="GO" id="GO:0000124">
    <property type="term" value="C:SAGA complex"/>
    <property type="evidence" value="ECO:0000318"/>
    <property type="project" value="GO_Central"/>
</dbReference>
<dbReference type="GO" id="GO:0005669">
    <property type="term" value="C:transcription factor TFIID complex"/>
    <property type="evidence" value="ECO:0000318"/>
    <property type="project" value="GO_Central"/>
</dbReference>
<dbReference type="GO" id="GO:0006367">
    <property type="term" value="P:transcription initiation at RNA polymerase II promoter"/>
    <property type="evidence" value="ECO:0000318"/>
    <property type="project" value="GO_Central"/>
</dbReference>
<dbReference type="FunFam" id="2.130.10.10:FF:000181">
    <property type="entry name" value="Proteasomal ATPase associated factor 1"/>
    <property type="match status" value="1"/>
</dbReference>
<dbReference type="FunFam" id="2.130.10.10:FF:000212">
    <property type="entry name" value="Proteasomal ATPase associated factor 1"/>
    <property type="match status" value="1"/>
</dbReference>
<dbReference type="Gene3D" id="2.130.10.10">
    <property type="entry name" value="YVTN repeat-like/Quinoprotein amine dehydrogenase"/>
    <property type="match status" value="2"/>
</dbReference>
<dbReference type="InterPro" id="IPR020472">
    <property type="entry name" value="G-protein_beta_WD-40_rep"/>
</dbReference>
<dbReference type="InterPro" id="IPR015943">
    <property type="entry name" value="WD40/YVTN_repeat-like_dom_sf"/>
</dbReference>
<dbReference type="InterPro" id="IPR036322">
    <property type="entry name" value="WD40_repeat_dom_sf"/>
</dbReference>
<dbReference type="InterPro" id="IPR001680">
    <property type="entry name" value="WD40_rpt"/>
</dbReference>
<dbReference type="InterPro" id="IPR051179">
    <property type="entry name" value="WD_repeat_multifunction"/>
</dbReference>
<dbReference type="PANTHER" id="PTHR19857:SF19">
    <property type="entry name" value="26S PROTEASOME REGULATORY SUBUNIT RPN14"/>
    <property type="match status" value="1"/>
</dbReference>
<dbReference type="PANTHER" id="PTHR19857">
    <property type="entry name" value="MITOCHONDRIAL DIVISION PROTEIN 1-RELATED"/>
    <property type="match status" value="1"/>
</dbReference>
<dbReference type="Pfam" id="PF00400">
    <property type="entry name" value="WD40"/>
    <property type="match status" value="3"/>
</dbReference>
<dbReference type="PRINTS" id="PR00320">
    <property type="entry name" value="GPROTEINBRPT"/>
</dbReference>
<dbReference type="SMART" id="SM00320">
    <property type="entry name" value="WD40"/>
    <property type="match status" value="6"/>
</dbReference>
<dbReference type="SUPFAM" id="SSF50978">
    <property type="entry name" value="WD40 repeat-like"/>
    <property type="match status" value="1"/>
</dbReference>
<dbReference type="PROSITE" id="PS00678">
    <property type="entry name" value="WD_REPEATS_1"/>
    <property type="match status" value="1"/>
</dbReference>
<dbReference type="PROSITE" id="PS50082">
    <property type="entry name" value="WD_REPEATS_2"/>
    <property type="match status" value="3"/>
</dbReference>
<dbReference type="PROSITE" id="PS50294">
    <property type="entry name" value="WD_REPEATS_REGION"/>
    <property type="match status" value="1"/>
</dbReference>
<accession>Q9BRP4</accession>
<accession>A6NDR5</accession>
<accession>B4DPB0</accession>
<accession>B7ZAS9</accession>
<accession>Q4G165</accession>
<accession>Q53HS9</accession>
<accession>Q7Z500</accession>
<accession>Q8TBU6</accession>
<accession>Q9HAB6</accession>
<name>PAAF1_HUMAN</name>
<keyword id="KW-0007">Acetylation</keyword>
<keyword id="KW-0025">Alternative splicing</keyword>
<keyword id="KW-0945">Host-virus interaction</keyword>
<keyword id="KW-0647">Proteasome</keyword>
<keyword id="KW-1267">Proteomics identification</keyword>
<keyword id="KW-1185">Reference proteome</keyword>
<keyword id="KW-0677">Repeat</keyword>
<keyword id="KW-0853">WD repeat</keyword>
<reference key="1">
    <citation type="submission" date="1998-08" db="EMBL/GenBank/DDBJ databases">
        <title>Cloning of a new human cDNA homology to Xenopus laevis gene 16 mRNA.</title>
        <authorList>
            <person name="Bi A.D."/>
            <person name="Yu L."/>
            <person name="Tu Q."/>
            <person name="Yang J."/>
            <person name="Dai F.Y."/>
            <person name="Cui W.C."/>
            <person name="Zheng L.H."/>
            <person name="Zhao S.Y."/>
        </authorList>
    </citation>
    <scope>NUCLEOTIDE SEQUENCE [MRNA] (ISOFORM 2)</scope>
    <scope>VARIANT GLY-209</scope>
</reference>
<reference key="2">
    <citation type="journal article" date="2004" name="Nat. Genet.">
        <title>Complete sequencing and characterization of 21,243 full-length human cDNAs.</title>
        <authorList>
            <person name="Ota T."/>
            <person name="Suzuki Y."/>
            <person name="Nishikawa T."/>
            <person name="Otsuki T."/>
            <person name="Sugiyama T."/>
            <person name="Irie R."/>
            <person name="Wakamatsu A."/>
            <person name="Hayashi K."/>
            <person name="Sato H."/>
            <person name="Nagai K."/>
            <person name="Kimura K."/>
            <person name="Makita H."/>
            <person name="Sekine M."/>
            <person name="Obayashi M."/>
            <person name="Nishi T."/>
            <person name="Shibahara T."/>
            <person name="Tanaka T."/>
            <person name="Ishii S."/>
            <person name="Yamamoto J."/>
            <person name="Saito K."/>
            <person name="Kawai Y."/>
            <person name="Isono Y."/>
            <person name="Nakamura Y."/>
            <person name="Nagahari K."/>
            <person name="Murakami K."/>
            <person name="Yasuda T."/>
            <person name="Iwayanagi T."/>
            <person name="Wagatsuma M."/>
            <person name="Shiratori A."/>
            <person name="Sudo H."/>
            <person name="Hosoiri T."/>
            <person name="Kaku Y."/>
            <person name="Kodaira H."/>
            <person name="Kondo H."/>
            <person name="Sugawara M."/>
            <person name="Takahashi M."/>
            <person name="Kanda K."/>
            <person name="Yokoi T."/>
            <person name="Furuya T."/>
            <person name="Kikkawa E."/>
            <person name="Omura Y."/>
            <person name="Abe K."/>
            <person name="Kamihara K."/>
            <person name="Katsuta N."/>
            <person name="Sato K."/>
            <person name="Tanikawa M."/>
            <person name="Yamazaki M."/>
            <person name="Ninomiya K."/>
            <person name="Ishibashi T."/>
            <person name="Yamashita H."/>
            <person name="Murakawa K."/>
            <person name="Fujimori K."/>
            <person name="Tanai H."/>
            <person name="Kimata M."/>
            <person name="Watanabe M."/>
            <person name="Hiraoka S."/>
            <person name="Chiba Y."/>
            <person name="Ishida S."/>
            <person name="Ono Y."/>
            <person name="Takiguchi S."/>
            <person name="Watanabe S."/>
            <person name="Yosida M."/>
            <person name="Hotuta T."/>
            <person name="Kusano J."/>
            <person name="Kanehori K."/>
            <person name="Takahashi-Fujii A."/>
            <person name="Hara H."/>
            <person name="Tanase T.-O."/>
            <person name="Nomura Y."/>
            <person name="Togiya S."/>
            <person name="Komai F."/>
            <person name="Hara R."/>
            <person name="Takeuchi K."/>
            <person name="Arita M."/>
            <person name="Imose N."/>
            <person name="Musashino K."/>
            <person name="Yuuki H."/>
            <person name="Oshima A."/>
            <person name="Sasaki N."/>
            <person name="Aotsuka S."/>
            <person name="Yoshikawa Y."/>
            <person name="Matsunawa H."/>
            <person name="Ichihara T."/>
            <person name="Shiohata N."/>
            <person name="Sano S."/>
            <person name="Moriya S."/>
            <person name="Momiyama H."/>
            <person name="Satoh N."/>
            <person name="Takami S."/>
            <person name="Terashima Y."/>
            <person name="Suzuki O."/>
            <person name="Nakagawa S."/>
            <person name="Senoh A."/>
            <person name="Mizoguchi H."/>
            <person name="Goto Y."/>
            <person name="Shimizu F."/>
            <person name="Wakebe H."/>
            <person name="Hishigaki H."/>
            <person name="Watanabe T."/>
            <person name="Sugiyama A."/>
            <person name="Takemoto M."/>
            <person name="Kawakami B."/>
            <person name="Yamazaki M."/>
            <person name="Watanabe K."/>
            <person name="Kumagai A."/>
            <person name="Itakura S."/>
            <person name="Fukuzumi Y."/>
            <person name="Fujimori Y."/>
            <person name="Komiyama M."/>
            <person name="Tashiro H."/>
            <person name="Tanigami A."/>
            <person name="Fujiwara T."/>
            <person name="Ono T."/>
            <person name="Yamada K."/>
            <person name="Fujii Y."/>
            <person name="Ozaki K."/>
            <person name="Hirao M."/>
            <person name="Ohmori Y."/>
            <person name="Kawabata A."/>
            <person name="Hikiji T."/>
            <person name="Kobatake N."/>
            <person name="Inagaki H."/>
            <person name="Ikema Y."/>
            <person name="Okamoto S."/>
            <person name="Okitani R."/>
            <person name="Kawakami T."/>
            <person name="Noguchi S."/>
            <person name="Itoh T."/>
            <person name="Shigeta K."/>
            <person name="Senba T."/>
            <person name="Matsumura K."/>
            <person name="Nakajima Y."/>
            <person name="Mizuno T."/>
            <person name="Morinaga M."/>
            <person name="Sasaki M."/>
            <person name="Togashi T."/>
            <person name="Oyama M."/>
            <person name="Hata H."/>
            <person name="Watanabe M."/>
            <person name="Komatsu T."/>
            <person name="Mizushima-Sugano J."/>
            <person name="Satoh T."/>
            <person name="Shirai Y."/>
            <person name="Takahashi Y."/>
            <person name="Nakagawa K."/>
            <person name="Okumura K."/>
            <person name="Nagase T."/>
            <person name="Nomura N."/>
            <person name="Kikuchi H."/>
            <person name="Masuho Y."/>
            <person name="Yamashita R."/>
            <person name="Nakai K."/>
            <person name="Yada T."/>
            <person name="Nakamura Y."/>
            <person name="Ohara O."/>
            <person name="Isogai T."/>
            <person name="Sugano S."/>
        </authorList>
    </citation>
    <scope>NUCLEOTIDE SEQUENCE [LARGE SCALE MRNA] (ISOFORMS 1 AND 3)</scope>
    <scope>VARIANT GLY-209</scope>
    <source>
        <tissue>Embryo</tissue>
        <tissue>Kidney</tissue>
        <tissue>Testis</tissue>
    </source>
</reference>
<reference key="3">
    <citation type="submission" date="2005-04" db="EMBL/GenBank/DDBJ databases">
        <authorList>
            <person name="Suzuki Y."/>
            <person name="Sugano S."/>
            <person name="Totoki Y."/>
            <person name="Toyoda A."/>
            <person name="Takeda T."/>
            <person name="Sakaki Y."/>
            <person name="Tanaka A."/>
            <person name="Yokoyama S."/>
        </authorList>
    </citation>
    <scope>NUCLEOTIDE SEQUENCE [LARGE SCALE MRNA] (ISOFORM 1)</scope>
    <scope>VARIANT SER-139</scope>
    <source>
        <tissue>Adipose tissue</tissue>
    </source>
</reference>
<reference key="4">
    <citation type="journal article" date="2006" name="Nature">
        <title>Human chromosome 11 DNA sequence and analysis including novel gene identification.</title>
        <authorList>
            <person name="Taylor T.D."/>
            <person name="Noguchi H."/>
            <person name="Totoki Y."/>
            <person name="Toyoda A."/>
            <person name="Kuroki Y."/>
            <person name="Dewar K."/>
            <person name="Lloyd C."/>
            <person name="Itoh T."/>
            <person name="Takeda T."/>
            <person name="Kim D.-W."/>
            <person name="She X."/>
            <person name="Barlow K.F."/>
            <person name="Bloom T."/>
            <person name="Bruford E."/>
            <person name="Chang J.L."/>
            <person name="Cuomo C.A."/>
            <person name="Eichler E."/>
            <person name="FitzGerald M.G."/>
            <person name="Jaffe D.B."/>
            <person name="LaButti K."/>
            <person name="Nicol R."/>
            <person name="Park H.-S."/>
            <person name="Seaman C."/>
            <person name="Sougnez C."/>
            <person name="Yang X."/>
            <person name="Zimmer A.R."/>
            <person name="Zody M.C."/>
            <person name="Birren B.W."/>
            <person name="Nusbaum C."/>
            <person name="Fujiyama A."/>
            <person name="Hattori M."/>
            <person name="Rogers J."/>
            <person name="Lander E.S."/>
            <person name="Sakaki Y."/>
        </authorList>
    </citation>
    <scope>NUCLEOTIDE SEQUENCE [LARGE SCALE GENOMIC DNA]</scope>
</reference>
<reference key="5">
    <citation type="submission" date="2005-07" db="EMBL/GenBank/DDBJ databases">
        <authorList>
            <person name="Mural R.J."/>
            <person name="Istrail S."/>
            <person name="Sutton G.G."/>
            <person name="Florea L."/>
            <person name="Halpern A.L."/>
            <person name="Mobarry C.M."/>
            <person name="Lippert R."/>
            <person name="Walenz B."/>
            <person name="Shatkay H."/>
            <person name="Dew I."/>
            <person name="Miller J.R."/>
            <person name="Flanigan M.J."/>
            <person name="Edwards N.J."/>
            <person name="Bolanos R."/>
            <person name="Fasulo D."/>
            <person name="Halldorsson B.V."/>
            <person name="Hannenhalli S."/>
            <person name="Turner R."/>
            <person name="Yooseph S."/>
            <person name="Lu F."/>
            <person name="Nusskern D.R."/>
            <person name="Shue B.C."/>
            <person name="Zheng X.H."/>
            <person name="Zhong F."/>
            <person name="Delcher A.L."/>
            <person name="Huson D.H."/>
            <person name="Kravitz S.A."/>
            <person name="Mouchard L."/>
            <person name="Reinert K."/>
            <person name="Remington K.A."/>
            <person name="Clark A.G."/>
            <person name="Waterman M.S."/>
            <person name="Eichler E.E."/>
            <person name="Adams M.D."/>
            <person name="Hunkapiller M.W."/>
            <person name="Myers E.W."/>
            <person name="Venter J.C."/>
        </authorList>
    </citation>
    <scope>NUCLEOTIDE SEQUENCE [LARGE SCALE GENOMIC DNA]</scope>
</reference>
<reference key="6">
    <citation type="journal article" date="2004" name="Genome Res.">
        <title>The status, quality, and expansion of the NIH full-length cDNA project: the Mammalian Gene Collection (MGC).</title>
        <authorList>
            <consortium name="The MGC Project Team"/>
        </authorList>
    </citation>
    <scope>NUCLEOTIDE SEQUENCE [LARGE SCALE MRNA] (ISOFORMS 1 AND 2)</scope>
    <scope>VARIANTS VAL-53 AND GLY-209</scope>
    <source>
        <tissue>Brain</tissue>
        <tissue>Lung</tissue>
    </source>
</reference>
<reference key="7">
    <citation type="journal article" date="2005" name="Mol. Cell. Biol.">
        <title>Proteasomal ATPase-associated factor 1 negatively regulates proteasome activity by interacting with proteasomal ATPases.</title>
        <authorList>
            <person name="Park Y."/>
            <person name="Hwang Y.-P."/>
            <person name="Lee J.-S."/>
            <person name="Seo S.-H."/>
            <person name="Yoon S.K."/>
            <person name="Yoon J.-B."/>
        </authorList>
    </citation>
    <scope>FUNCTION</scope>
    <scope>TISSUE SPECIFICITY</scope>
    <scope>INTERACTION WITH PSMC1; PSMC2; PSMC3; PSMC4; PSMC5 AND PSMC6</scope>
    <scope>IDENTIFICATION BY MASS SPECTROMETRY</scope>
</reference>
<reference key="8">
    <citation type="journal article" date="2007" name="Biochemistry">
        <title>Mass spectrometric characterization of the affinity-purified human 26S proteasome complex.</title>
        <authorList>
            <person name="Wang X."/>
            <person name="Chen C.-F."/>
            <person name="Baker P.R."/>
            <person name="Chen P.-L."/>
            <person name="Kaiser P."/>
            <person name="Huang L."/>
        </authorList>
    </citation>
    <scope>IDENTIFICATION BY MASS SPECTROMETRY [LARGE SCALE ANALYSIS]</scope>
    <source>
        <tissue>Embryonic kidney</tissue>
    </source>
</reference>
<reference key="9">
    <citation type="journal article" date="2007" name="Mol. Cell">
        <title>The proteasome regulates HIV-1 transcription by both proteolytic and nonproteolytic mechanisms.</title>
        <authorList>
            <person name="Lassot I."/>
            <person name="Latreille D."/>
            <person name="Rousset E."/>
            <person name="Sourisseau M."/>
            <person name="Linares L.K."/>
            <person name="Chable-Bessia C."/>
            <person name="Coux O."/>
            <person name="Benkirane M."/>
            <person name="Kiernan R.E."/>
        </authorList>
    </citation>
    <scope>FUNCTION</scope>
    <scope>INTERACTION WITH HIV-1 TAT (MICROBIAL INFECTION)</scope>
</reference>
<reference key="10">
    <citation type="journal article" date="2009" name="Anal. Chem.">
        <title>Lys-N and trypsin cover complementary parts of the phosphoproteome in a refined SCX-based approach.</title>
        <authorList>
            <person name="Gauci S."/>
            <person name="Helbig A.O."/>
            <person name="Slijper M."/>
            <person name="Krijgsveld J."/>
            <person name="Heck A.J."/>
            <person name="Mohammed S."/>
        </authorList>
    </citation>
    <scope>ACETYLATION [LARGE SCALE ANALYSIS] AT ALA-2</scope>
    <scope>CLEAVAGE OF INITIATOR METHIONINE [LARGE SCALE ANALYSIS]</scope>
    <scope>IDENTIFICATION BY MASS SPECTROMETRY [LARGE SCALE ANALYSIS]</scope>
</reference>
<reference key="11">
    <citation type="journal article" date="2011" name="BMC Syst. Biol.">
        <title>Initial characterization of the human central proteome.</title>
        <authorList>
            <person name="Burkard T.R."/>
            <person name="Planyavsky M."/>
            <person name="Kaupe I."/>
            <person name="Breitwieser F.P."/>
            <person name="Buerckstuemmer T."/>
            <person name="Bennett K.L."/>
            <person name="Superti-Furga G."/>
            <person name="Colinge J."/>
        </authorList>
    </citation>
    <scope>IDENTIFICATION BY MASS SPECTROMETRY [LARGE SCALE ANALYSIS]</scope>
</reference>
<reference key="12">
    <citation type="journal article" date="2012" name="Retrovirology">
        <title>Spt6 levels are modulated by PAAF1 and proteasome to regulate the HIV-1 LTR.</title>
        <authorList>
            <person name="Nakamura M."/>
            <person name="Basavarajaiah P."/>
            <person name="Rousset E."/>
            <person name="Beraud C."/>
            <person name="Latreille D."/>
            <person name="Henaoui I.S."/>
            <person name="Lassot I."/>
            <person name="Mari B."/>
            <person name="Kiernan R."/>
        </authorList>
    </citation>
    <scope>FUNCTION</scope>
    <scope>INTERACTION WITH SUPT6H</scope>
</reference>
<evidence type="ECO:0000269" key="1">
    <source>
    </source>
</evidence>
<evidence type="ECO:0000269" key="2">
    <source>
    </source>
</evidence>
<evidence type="ECO:0000269" key="3">
    <source>
    </source>
</evidence>
<evidence type="ECO:0000269" key="4">
    <source>
    </source>
</evidence>
<evidence type="ECO:0000269" key="5">
    <source>
    </source>
</evidence>
<evidence type="ECO:0000269" key="6">
    <source ref="1"/>
</evidence>
<evidence type="ECO:0000269" key="7">
    <source ref="3"/>
</evidence>
<evidence type="ECO:0000303" key="8">
    <source>
    </source>
</evidence>
<evidence type="ECO:0000303" key="9">
    <source>
    </source>
</evidence>
<evidence type="ECO:0000303" key="10">
    <source ref="1"/>
</evidence>
<evidence type="ECO:0000305" key="11"/>
<evidence type="ECO:0007744" key="12">
    <source>
    </source>
</evidence>
<proteinExistence type="evidence at protein level"/>